<dbReference type="EMBL" id="CR378663">
    <property type="protein sequence ID" value="CAG18775.1"/>
    <property type="molecule type" value="Genomic_DNA"/>
</dbReference>
<dbReference type="RefSeq" id="WP_011217140.1">
    <property type="nucleotide sequence ID" value="NC_006370.1"/>
</dbReference>
<dbReference type="SMR" id="Q6LVA0"/>
<dbReference type="STRING" id="298386.PBPRA0336"/>
<dbReference type="KEGG" id="ppr:PBPRA0336"/>
<dbReference type="eggNOG" id="COG0256">
    <property type="taxonomic scope" value="Bacteria"/>
</dbReference>
<dbReference type="HOGENOM" id="CLU_098841_0_1_6"/>
<dbReference type="Proteomes" id="UP000000593">
    <property type="component" value="Chromosome 1"/>
</dbReference>
<dbReference type="GO" id="GO:0022625">
    <property type="term" value="C:cytosolic large ribosomal subunit"/>
    <property type="evidence" value="ECO:0007669"/>
    <property type="project" value="TreeGrafter"/>
</dbReference>
<dbReference type="GO" id="GO:0008097">
    <property type="term" value="F:5S rRNA binding"/>
    <property type="evidence" value="ECO:0007669"/>
    <property type="project" value="TreeGrafter"/>
</dbReference>
<dbReference type="GO" id="GO:0003735">
    <property type="term" value="F:structural constituent of ribosome"/>
    <property type="evidence" value="ECO:0007669"/>
    <property type="project" value="InterPro"/>
</dbReference>
<dbReference type="GO" id="GO:0006412">
    <property type="term" value="P:translation"/>
    <property type="evidence" value="ECO:0007669"/>
    <property type="project" value="UniProtKB-UniRule"/>
</dbReference>
<dbReference type="CDD" id="cd00432">
    <property type="entry name" value="Ribosomal_L18_L5e"/>
    <property type="match status" value="1"/>
</dbReference>
<dbReference type="FunFam" id="3.30.420.100:FF:000001">
    <property type="entry name" value="50S ribosomal protein L18"/>
    <property type="match status" value="1"/>
</dbReference>
<dbReference type="Gene3D" id="3.30.420.100">
    <property type="match status" value="1"/>
</dbReference>
<dbReference type="HAMAP" id="MF_01337_B">
    <property type="entry name" value="Ribosomal_uL18_B"/>
    <property type="match status" value="1"/>
</dbReference>
<dbReference type="InterPro" id="IPR004389">
    <property type="entry name" value="Ribosomal_uL18_bac-type"/>
</dbReference>
<dbReference type="InterPro" id="IPR005484">
    <property type="entry name" value="Ribosomal_uL18_bac/euk"/>
</dbReference>
<dbReference type="NCBIfam" id="TIGR00060">
    <property type="entry name" value="L18_bact"/>
    <property type="match status" value="1"/>
</dbReference>
<dbReference type="PANTHER" id="PTHR12899">
    <property type="entry name" value="39S RIBOSOMAL PROTEIN L18, MITOCHONDRIAL"/>
    <property type="match status" value="1"/>
</dbReference>
<dbReference type="PANTHER" id="PTHR12899:SF3">
    <property type="entry name" value="LARGE RIBOSOMAL SUBUNIT PROTEIN UL18M"/>
    <property type="match status" value="1"/>
</dbReference>
<dbReference type="Pfam" id="PF00861">
    <property type="entry name" value="Ribosomal_L18p"/>
    <property type="match status" value="1"/>
</dbReference>
<dbReference type="SUPFAM" id="SSF53137">
    <property type="entry name" value="Translational machinery components"/>
    <property type="match status" value="1"/>
</dbReference>
<sequence length="117" mass="12563">MDKKASRIRRATRARRKIAELGATRLVIHRTPRHVYAQVIAPNGSEVIAAASTVEKVIRESIANTGNKDAAAAVGKAIAERAIEKGISNVAFDRSGFQYHGRVAALAEAAREAGLKF</sequence>
<reference key="1">
    <citation type="journal article" date="2005" name="Science">
        <title>Life at depth: Photobacterium profundum genome sequence and expression analysis.</title>
        <authorList>
            <person name="Vezzi A."/>
            <person name="Campanaro S."/>
            <person name="D'Angelo M."/>
            <person name="Simonato F."/>
            <person name="Vitulo N."/>
            <person name="Lauro F.M."/>
            <person name="Cestaro A."/>
            <person name="Malacrida G."/>
            <person name="Simionati B."/>
            <person name="Cannata N."/>
            <person name="Romualdi C."/>
            <person name="Bartlett D.H."/>
            <person name="Valle G."/>
        </authorList>
    </citation>
    <scope>NUCLEOTIDE SEQUENCE [LARGE SCALE GENOMIC DNA]</scope>
    <source>
        <strain>ATCC BAA-1253 / SS9</strain>
    </source>
</reference>
<proteinExistence type="inferred from homology"/>
<keyword id="KW-1185">Reference proteome</keyword>
<keyword id="KW-0687">Ribonucleoprotein</keyword>
<keyword id="KW-0689">Ribosomal protein</keyword>
<keyword id="KW-0694">RNA-binding</keyword>
<keyword id="KW-0699">rRNA-binding</keyword>
<accession>Q6LVA0</accession>
<comment type="function">
    <text evidence="1">This is one of the proteins that bind and probably mediate the attachment of the 5S RNA into the large ribosomal subunit, where it forms part of the central protuberance.</text>
</comment>
<comment type="subunit">
    <text evidence="1">Part of the 50S ribosomal subunit; part of the 5S rRNA/L5/L18/L25 subcomplex. Contacts the 5S and 23S rRNAs.</text>
</comment>
<comment type="similarity">
    <text evidence="1">Belongs to the universal ribosomal protein uL18 family.</text>
</comment>
<evidence type="ECO:0000255" key="1">
    <source>
        <dbReference type="HAMAP-Rule" id="MF_01337"/>
    </source>
</evidence>
<evidence type="ECO:0000305" key="2"/>
<protein>
    <recommendedName>
        <fullName evidence="1">Large ribosomal subunit protein uL18</fullName>
    </recommendedName>
    <alternativeName>
        <fullName evidence="2">50S ribosomal protein L18</fullName>
    </alternativeName>
</protein>
<gene>
    <name evidence="1" type="primary">rplR</name>
    <name type="ordered locus">PBPRA0336</name>
</gene>
<organism>
    <name type="scientific">Photobacterium profundum (strain SS9)</name>
    <dbReference type="NCBI Taxonomy" id="298386"/>
    <lineage>
        <taxon>Bacteria</taxon>
        <taxon>Pseudomonadati</taxon>
        <taxon>Pseudomonadota</taxon>
        <taxon>Gammaproteobacteria</taxon>
        <taxon>Vibrionales</taxon>
        <taxon>Vibrionaceae</taxon>
        <taxon>Photobacterium</taxon>
    </lineage>
</organism>
<feature type="chain" id="PRO_0000131316" description="Large ribosomal subunit protein uL18">
    <location>
        <begin position="1"/>
        <end position="117"/>
    </location>
</feature>
<name>RL18_PHOPR</name>